<gene>
    <name type="primary">RPA2</name>
</gene>
<evidence type="ECO:0000250" key="1">
    <source>
        <dbReference type="UniProtKB" id="P22138"/>
    </source>
</evidence>
<evidence type="ECO:0000305" key="2"/>
<keyword id="KW-0240">DNA-directed RNA polymerase</keyword>
<keyword id="KW-0479">Metal-binding</keyword>
<keyword id="KW-0548">Nucleotidyltransferase</keyword>
<keyword id="KW-0539">Nucleus</keyword>
<keyword id="KW-0804">Transcription</keyword>
<keyword id="KW-0808">Transferase</keyword>
<keyword id="KW-0862">Zinc</keyword>
<keyword id="KW-0863">Zinc-finger</keyword>
<accession>P28365</accession>
<feature type="chain" id="PRO_0000048076" description="DNA-directed RNA polymerase I subunit RPA2">
    <location>
        <begin position="1"/>
        <end position="1166"/>
    </location>
</feature>
<feature type="zinc finger region" description="C4-type" evidence="1">
    <location>
        <begin position="1081"/>
        <end position="1130"/>
    </location>
</feature>
<dbReference type="EC" id="2.7.7.6" evidence="1"/>
<dbReference type="EMBL" id="X66451">
    <property type="protein sequence ID" value="CAA47067.1"/>
    <property type="molecule type" value="Genomic_DNA"/>
</dbReference>
<dbReference type="PIR" id="S70413">
    <property type="entry name" value="S70413"/>
</dbReference>
<dbReference type="SMR" id="P28365"/>
<dbReference type="GO" id="GO:0000428">
    <property type="term" value="C:DNA-directed RNA polymerase complex"/>
    <property type="evidence" value="ECO:0007669"/>
    <property type="project" value="UniProtKB-KW"/>
</dbReference>
<dbReference type="GO" id="GO:0005739">
    <property type="term" value="C:mitochondrion"/>
    <property type="evidence" value="ECO:0007669"/>
    <property type="project" value="GOC"/>
</dbReference>
<dbReference type="GO" id="GO:0005730">
    <property type="term" value="C:nucleolus"/>
    <property type="evidence" value="ECO:0007669"/>
    <property type="project" value="UniProtKB-SubCell"/>
</dbReference>
<dbReference type="GO" id="GO:0009536">
    <property type="term" value="C:plastid"/>
    <property type="evidence" value="ECO:0007669"/>
    <property type="project" value="GOC"/>
</dbReference>
<dbReference type="GO" id="GO:0003677">
    <property type="term" value="F:DNA binding"/>
    <property type="evidence" value="ECO:0007669"/>
    <property type="project" value="InterPro"/>
</dbReference>
<dbReference type="GO" id="GO:0003899">
    <property type="term" value="F:DNA-directed RNA polymerase activity"/>
    <property type="evidence" value="ECO:0007669"/>
    <property type="project" value="UniProtKB-EC"/>
</dbReference>
<dbReference type="GO" id="GO:0032549">
    <property type="term" value="F:ribonucleoside binding"/>
    <property type="evidence" value="ECO:0007669"/>
    <property type="project" value="InterPro"/>
</dbReference>
<dbReference type="GO" id="GO:0008270">
    <property type="term" value="F:zinc ion binding"/>
    <property type="evidence" value="ECO:0007669"/>
    <property type="project" value="UniProtKB-KW"/>
</dbReference>
<dbReference type="GO" id="GO:0006351">
    <property type="term" value="P:DNA-templated transcription"/>
    <property type="evidence" value="ECO:0007669"/>
    <property type="project" value="InterPro"/>
</dbReference>
<dbReference type="CDD" id="cd00653">
    <property type="entry name" value="RNA_pol_B_RPB2"/>
    <property type="match status" value="1"/>
</dbReference>
<dbReference type="FunFam" id="2.40.270.10:FF:000011">
    <property type="entry name" value="DNA-directed RNA polymerase subunit beta"/>
    <property type="match status" value="1"/>
</dbReference>
<dbReference type="FunFam" id="3.90.1800.10:FF:000004">
    <property type="entry name" value="DNA-directed RNA polymerase subunit beta"/>
    <property type="match status" value="1"/>
</dbReference>
<dbReference type="Gene3D" id="2.40.50.150">
    <property type="match status" value="1"/>
</dbReference>
<dbReference type="Gene3D" id="3.90.1100.10">
    <property type="match status" value="2"/>
</dbReference>
<dbReference type="Gene3D" id="2.40.270.10">
    <property type="entry name" value="DNA-directed RNA polymerase, subunit 2, domain 6"/>
    <property type="match status" value="1"/>
</dbReference>
<dbReference type="Gene3D" id="3.90.1800.10">
    <property type="entry name" value="RNA polymerase alpha subunit dimerisation domain"/>
    <property type="match status" value="1"/>
</dbReference>
<dbReference type="Gene3D" id="3.90.1110.10">
    <property type="entry name" value="RNA polymerase Rpb2, domain 2"/>
    <property type="match status" value="1"/>
</dbReference>
<dbReference type="InterPro" id="IPR015712">
    <property type="entry name" value="DNA-dir_RNA_pol_su2"/>
</dbReference>
<dbReference type="InterPro" id="IPR007120">
    <property type="entry name" value="DNA-dir_RNAP_su2_dom"/>
</dbReference>
<dbReference type="InterPro" id="IPR037033">
    <property type="entry name" value="DNA-dir_RNAP_su2_hyb_sf"/>
</dbReference>
<dbReference type="InterPro" id="IPR007121">
    <property type="entry name" value="RNA_pol_bsu_CS"/>
</dbReference>
<dbReference type="InterPro" id="IPR007644">
    <property type="entry name" value="RNA_pol_bsu_protrusion"/>
</dbReference>
<dbReference type="InterPro" id="IPR007642">
    <property type="entry name" value="RNA_pol_Rpb2_2"/>
</dbReference>
<dbReference type="InterPro" id="IPR037034">
    <property type="entry name" value="RNA_pol_Rpb2_2_sf"/>
</dbReference>
<dbReference type="InterPro" id="IPR007645">
    <property type="entry name" value="RNA_pol_Rpb2_3"/>
</dbReference>
<dbReference type="InterPro" id="IPR007641">
    <property type="entry name" value="RNA_pol_Rpb2_7"/>
</dbReference>
<dbReference type="InterPro" id="IPR014724">
    <property type="entry name" value="RNA_pol_RPB2_OB-fold"/>
</dbReference>
<dbReference type="InterPro" id="IPR009674">
    <property type="entry name" value="Rpa2_dom_4"/>
</dbReference>
<dbReference type="PANTHER" id="PTHR20856">
    <property type="entry name" value="DNA-DIRECTED RNA POLYMERASE I SUBUNIT 2"/>
    <property type="match status" value="1"/>
</dbReference>
<dbReference type="Pfam" id="PF06883">
    <property type="entry name" value="RNA_pol_Rpa2_4"/>
    <property type="match status" value="1"/>
</dbReference>
<dbReference type="Pfam" id="PF04563">
    <property type="entry name" value="RNA_pol_Rpb2_1"/>
    <property type="match status" value="1"/>
</dbReference>
<dbReference type="Pfam" id="PF04561">
    <property type="entry name" value="RNA_pol_Rpb2_2"/>
    <property type="match status" value="1"/>
</dbReference>
<dbReference type="Pfam" id="PF04565">
    <property type="entry name" value="RNA_pol_Rpb2_3"/>
    <property type="match status" value="1"/>
</dbReference>
<dbReference type="Pfam" id="PF00562">
    <property type="entry name" value="RNA_pol_Rpb2_6"/>
    <property type="match status" value="1"/>
</dbReference>
<dbReference type="Pfam" id="PF04560">
    <property type="entry name" value="RNA_pol_Rpb2_7"/>
    <property type="match status" value="1"/>
</dbReference>
<dbReference type="SUPFAM" id="SSF64484">
    <property type="entry name" value="beta and beta-prime subunits of DNA dependent RNA-polymerase"/>
    <property type="match status" value="1"/>
</dbReference>
<dbReference type="PROSITE" id="PS01166">
    <property type="entry name" value="RNA_POL_BETA"/>
    <property type="match status" value="1"/>
</dbReference>
<comment type="function">
    <text evidence="1">DNA-dependent RNA polymerase catalyzes the transcription of DNA into RNA using the four ribonucleoside triphosphates as substrates. Second largest core component of RNA polymerase I which synthesizes ribosomal RNA precursors. Proposed to contribute to the polymerase catalytic activity and forms the polymerase active center together with the largest subunit. Pol I is composed of mobile elements and RPA2 is part of the core element with the central large cleft and probably a clamp element that moves to open and close the cleft (By similarity).</text>
</comment>
<comment type="catalytic activity">
    <reaction evidence="1">
        <text>RNA(n) + a ribonucleoside 5'-triphosphate = RNA(n+1) + diphosphate</text>
        <dbReference type="Rhea" id="RHEA:21248"/>
        <dbReference type="Rhea" id="RHEA-COMP:14527"/>
        <dbReference type="Rhea" id="RHEA-COMP:17342"/>
        <dbReference type="ChEBI" id="CHEBI:33019"/>
        <dbReference type="ChEBI" id="CHEBI:61557"/>
        <dbReference type="ChEBI" id="CHEBI:140395"/>
        <dbReference type="EC" id="2.7.7.6"/>
    </reaction>
    <physiologicalReaction direction="left-to-right" evidence="1">
        <dbReference type="Rhea" id="RHEA:21249"/>
    </physiologicalReaction>
</comment>
<comment type="subunit">
    <text evidence="1">Component of the RNA polymerase I (Pol I) complex consisting of at least 13 subunits.</text>
</comment>
<comment type="subcellular location">
    <subcellularLocation>
        <location evidence="1">Nucleus</location>
        <location evidence="1">Nucleolus</location>
    </subcellularLocation>
</comment>
<comment type="similarity">
    <text evidence="2">Belongs to the RNA polymerase beta chain family.</text>
</comment>
<sequence>MKTNAKFDRKEISKIYKNIARHHIDSFDFAMSTCLNRACEHMLPFDYIVPEESASCGFKKLTLWYDSFELGQPSLGEIDYDSHILYPSECRQRKMTYTIPLFATIFKKFDDEMVDNFKVKLGDIPTMGRKKFCNLKGLTKKELAKRGEDMLEFGGYFIVNGNEKVIRMLIVPKRNFPIAFKRSKFLERGKDFTDYGVQMRCVRDDFTAQTITLTYLSDGSVSLRLIYQKQEFLIPIILILKALKNCTDRQIYERIVKGNFNQRQISDRVEAILAVGKDLNIYDSDQSKALIGSRFRIVLAGITSETSDIDAGDLFLSKHICIHTDSYEAKFDTLILMIDKLYASVANEVELDNLDSVAMQDVLLGGHLYLQILSEKLFDCLHINLRARLNKELKRHNFDPMKFRDVLTNQKINCGIGLIGKRMENFLATGNLISRTNLDLMQTSGFCIIGDKLNNIRFLSHFRSIHRGQYFAEQKTTSVRKLLPESWGFICPVHTPDGAPCGLLNHISMSCVPIGSEEKQIDIDKFRNILGELGMNSISSDLCLNYHTGYYPVIFDGIHLGYVEKDIGESFVEGLRYLKCTQSQPDYAIPRTLEIAFIPFSGYSRNLQWPGIFLASTPARFTRPVKNLHYNCIEWISPLEQMNLSIACTDEDITPETTHQELDPINILSIVASVGVFAEYNQSPRNMYQCQMAKQTMGTPYHNHQFRTDNKIYRLLFPHRPIVKTRTQVDFDIEEYPSGTNAVVAVISYTGYDLEDAMIINKSSYERGFGHGVVYKSYTHDLNESNSQSTRGIKSSVRYKFLNNVSQKDKSKIKLENIDPDGLPKIGSQLTKGKPELCIFDTLKRGAKLSKFKDSEKARIETVRVCGNDDKNPDNLSIGYTIRYSRIPVIGDKFSSRHGQKGVLSVLWPQVDMPFTENGITPDLIINPHAFPSRMTMGMLIQSMAAKSGSLRGEFKTVETFQRYDDNDIVGHFGKELLDKGFNYHGNELMYSGIFGTPLKADIFIGVVYYQRLRHMVSDKSQARGTGPIDILTHQPVKGRKKGGGIRFGEMERDSLLAHGAAYCLNDRLFRSSDYSEGFVCQNCGSILSCYVNRAIMKTQTFIPPSLDESNKDTEDKEIHMNEKVICKVCKKNSNCKKVALPFVLRFLANELASMGIKLKFTVNDF</sequence>
<proteinExistence type="inferred from homology"/>
<organism>
    <name type="scientific">Euplotoides octocarinatus</name>
    <name type="common">Freshwater ciliate</name>
    <name type="synonym">Euplotes octocarinatus</name>
    <dbReference type="NCBI Taxonomy" id="2716877"/>
    <lineage>
        <taxon>Eukaryota</taxon>
        <taxon>Sar</taxon>
        <taxon>Alveolata</taxon>
        <taxon>Ciliophora</taxon>
        <taxon>Intramacronucleata</taxon>
        <taxon>Spirotrichea</taxon>
        <taxon>Hypotrichia</taxon>
        <taxon>Euplotida</taxon>
        <taxon>Euplotidae</taxon>
        <taxon>Euplotes</taxon>
    </lineage>
</organism>
<name>RPA2_EUPOC</name>
<reference key="1">
    <citation type="journal article" date="1992" name="Nucleic Acids Res.">
        <title>TGA cysteine codons and intron sequences in conserved and nonconserved positions are found in macronuclear RNA polymerase genes of Euplotes octocarinatus.</title>
        <authorList>
            <person name="Kaufmann J."/>
            <person name="Florian V."/>
            <person name="Klein A."/>
        </authorList>
    </citation>
    <scope>NUCLEOTIDE SEQUENCE [GENOMIC DNA]</scope>
    <source>
        <strain>(68)-VIII</strain>
    </source>
</reference>
<reference key="2">
    <citation type="journal article" date="1992" name="Nucleic Acids Res.">
        <title>Gene dosage as a possible major determinant for equal expression levels of genes encoding RNA polymerase subunits in the hypotrichous ciliate Euplotes octocarinatus.</title>
        <authorList>
            <person name="Kaufmann J."/>
            <person name="Klein A."/>
        </authorList>
    </citation>
    <scope>NUCLEOTIDE SEQUENCE [GENOMIC DNA] OF 1-546</scope>
    <source>
        <strain>(68)-VIII</strain>
    </source>
</reference>
<protein>
    <recommendedName>
        <fullName>DNA-directed RNA polymerase I subunit RPA2</fullName>
        <shortName>RNA polymerase I subunit 2</shortName>
        <ecNumber evidence="1">2.7.7.6</ecNumber>
    </recommendedName>
</protein>